<name>Y2791_GEOSL</name>
<reference key="1">
    <citation type="journal article" date="2003" name="Science">
        <title>Genome of Geobacter sulfurreducens: metal reduction in subsurface environments.</title>
        <authorList>
            <person name="Methe B.A."/>
            <person name="Nelson K.E."/>
            <person name="Eisen J.A."/>
            <person name="Paulsen I.T."/>
            <person name="Nelson W.C."/>
            <person name="Heidelberg J.F."/>
            <person name="Wu D."/>
            <person name="Wu M."/>
            <person name="Ward N.L."/>
            <person name="Beanan M.J."/>
            <person name="Dodson R.J."/>
            <person name="Madupu R."/>
            <person name="Brinkac L.M."/>
            <person name="Daugherty S.C."/>
            <person name="DeBoy R.T."/>
            <person name="Durkin A.S."/>
            <person name="Gwinn M.L."/>
            <person name="Kolonay J.F."/>
            <person name="Sullivan S.A."/>
            <person name="Haft D.H."/>
            <person name="Selengut J."/>
            <person name="Davidsen T.M."/>
            <person name="Zafar N."/>
            <person name="White O."/>
            <person name="Tran B."/>
            <person name="Romero C."/>
            <person name="Forberger H.A."/>
            <person name="Weidman J.F."/>
            <person name="Khouri H.M."/>
            <person name="Feldblyum T.V."/>
            <person name="Utterback T.R."/>
            <person name="Van Aken S.E."/>
            <person name="Lovley D.R."/>
            <person name="Fraser C.M."/>
        </authorList>
    </citation>
    <scope>NUCLEOTIDE SEQUENCE [LARGE SCALE GENOMIC DNA]</scope>
    <source>
        <strain>ATCC 51573 / DSM 12127 / PCA</strain>
    </source>
</reference>
<proteinExistence type="inferred from homology"/>
<comment type="similarity">
    <text evidence="1">Belongs to the UPF0145 family.</text>
</comment>
<dbReference type="EMBL" id="AE017180">
    <property type="protein sequence ID" value="AAR36185.2"/>
    <property type="molecule type" value="Genomic_DNA"/>
</dbReference>
<dbReference type="RefSeq" id="NP_953835.4">
    <property type="nucleotide sequence ID" value="NC_002939.5"/>
</dbReference>
<dbReference type="RefSeq" id="WP_010943418.1">
    <property type="nucleotide sequence ID" value="NC_002939.5"/>
</dbReference>
<dbReference type="SMR" id="Q749F2"/>
<dbReference type="FunCoup" id="Q749F2">
    <property type="interactions" value="124"/>
</dbReference>
<dbReference type="STRING" id="243231.GSU2791"/>
<dbReference type="EnsemblBacteria" id="AAR36185">
    <property type="protein sequence ID" value="AAR36185"/>
    <property type="gene ID" value="GSU2791"/>
</dbReference>
<dbReference type="KEGG" id="gsu:GSU2791"/>
<dbReference type="PATRIC" id="fig|243231.5.peg.2812"/>
<dbReference type="eggNOG" id="COG0393">
    <property type="taxonomic scope" value="Bacteria"/>
</dbReference>
<dbReference type="HOGENOM" id="CLU_117144_3_2_7"/>
<dbReference type="InParanoid" id="Q749F2"/>
<dbReference type="OrthoDB" id="9796448at2"/>
<dbReference type="Proteomes" id="UP000000577">
    <property type="component" value="Chromosome"/>
</dbReference>
<dbReference type="Gene3D" id="3.30.110.70">
    <property type="entry name" value="Hypothetical protein apc22750. Chain B"/>
    <property type="match status" value="1"/>
</dbReference>
<dbReference type="HAMAP" id="MF_00338">
    <property type="entry name" value="UPF0145"/>
    <property type="match status" value="1"/>
</dbReference>
<dbReference type="InterPro" id="IPR035439">
    <property type="entry name" value="UPF0145_dom_sf"/>
</dbReference>
<dbReference type="InterPro" id="IPR002765">
    <property type="entry name" value="UPF0145_YbjQ-like"/>
</dbReference>
<dbReference type="NCBIfam" id="NF002776">
    <property type="entry name" value="PRK02877.1"/>
    <property type="match status" value="1"/>
</dbReference>
<dbReference type="PANTHER" id="PTHR34068">
    <property type="entry name" value="UPF0145 PROTEIN YBJQ"/>
    <property type="match status" value="1"/>
</dbReference>
<dbReference type="PANTHER" id="PTHR34068:SF1">
    <property type="entry name" value="UPF0145 PROTEIN YBJQ"/>
    <property type="match status" value="1"/>
</dbReference>
<dbReference type="Pfam" id="PF01906">
    <property type="entry name" value="YbjQ_1"/>
    <property type="match status" value="1"/>
</dbReference>
<dbReference type="SUPFAM" id="SSF117782">
    <property type="entry name" value="YbjQ-like"/>
    <property type="match status" value="1"/>
</dbReference>
<organism>
    <name type="scientific">Geobacter sulfurreducens (strain ATCC 51573 / DSM 12127 / PCA)</name>
    <dbReference type="NCBI Taxonomy" id="243231"/>
    <lineage>
        <taxon>Bacteria</taxon>
        <taxon>Pseudomonadati</taxon>
        <taxon>Thermodesulfobacteriota</taxon>
        <taxon>Desulfuromonadia</taxon>
        <taxon>Geobacterales</taxon>
        <taxon>Geobacteraceae</taxon>
        <taxon>Geobacter</taxon>
    </lineage>
</organism>
<evidence type="ECO:0000255" key="1">
    <source>
        <dbReference type="HAMAP-Rule" id="MF_00338"/>
    </source>
</evidence>
<protein>
    <recommendedName>
        <fullName evidence="1">UPF0145 protein GSU2791</fullName>
    </recommendedName>
</protein>
<keyword id="KW-1185">Reference proteome</keyword>
<accession>Q749F2</accession>
<gene>
    <name type="ordered locus">GSU2791</name>
</gene>
<feature type="chain" id="PRO_0000225828" description="UPF0145 protein GSU2791">
    <location>
        <begin position="1"/>
        <end position="106"/>
    </location>
</feature>
<sequence length="106" mass="11421">MIITTTPTIEGKRIVRYCGVVAGEAILGANLFKDLFANIRDMVGGRSATYERELQRARDIALRELEERAEELGATAVVGVDLDYEVMGQGNGMLMVSASGTAVVVE</sequence>